<comment type="function">
    <text evidence="3 5 6">FAD-dependent monooxygenase; part of the ATM1 gene cluster that mediates the biosynthesis of aflatrem, a tremorgenic mycotoxin with acute neurotoxic effects (PubMed:15528556, PubMed:19801473, PubMed:2867895). Synthesis of geranylgeranyl diphosphate (GGPP) by AtmG (a GGPP synthase) precedes condensation of GGPP with indole 3-glycerol phosphate, followed by epoxidation and cyclization by AtmM (a FAD-dependent monooxygenase) and AtmC (a prenyltransferase) to produce paspaline (PubMed:19801473). AtmB is also essential for paspaline production, but its exact role has not been identified yet (PubMed:19801473). AtmP, a cytochrome P450 monooxygenase, subsequently converts paspaline to 13-desoxypaxilline via PC-M6 by removal of the C-30 methyl group and oxidation at C-10 (PubMed:19801473). AtmQ, a cytochrome P450 monooxygenase, then catalyzes the oxidation of 13-desoxypaxilline, first at C-7 to produce paspalicine and then at C-13 to form paspalinine (PubMed:19801473). Finally, AtmD prenylates paspalinine to form aflatrem (PubMed:19801473).</text>
</comment>
<comment type="cofactor">
    <cofactor evidence="8">
        <name>FAD</name>
        <dbReference type="ChEBI" id="CHEBI:57692"/>
    </cofactor>
</comment>
<comment type="pathway">
    <text evidence="5 6">Secondary metabolite biosynthesis.</text>
</comment>
<comment type="subcellular location">
    <subcellularLocation>
        <location evidence="2">Membrane</location>
        <topology evidence="2">Multi-pass membrane protein</topology>
    </subcellularLocation>
</comment>
<comment type="induction">
    <text evidence="3 4 5">The onset of expression correlates with the onset of aflatrem biosynthesis in stationary cultures (PubMed:15528556, PubMed:19801473). Expression is induced by the developmental and secondary metabolism regulator veA (PubMed:16988822).</text>
</comment>
<comment type="similarity">
    <text evidence="8">Belongs to the paxM FAD-dependent monooxygenase family.</text>
</comment>
<gene>
    <name evidence="7" type="primary">atmM</name>
    <name evidence="7" type="ORF">AF113</name>
</gene>
<evidence type="ECO:0000250" key="1">
    <source>
        <dbReference type="UniProtKB" id="B8M9J8"/>
    </source>
</evidence>
<evidence type="ECO:0000255" key="2"/>
<evidence type="ECO:0000269" key="3">
    <source>
    </source>
</evidence>
<evidence type="ECO:0000269" key="4">
    <source>
    </source>
</evidence>
<evidence type="ECO:0000269" key="5">
    <source>
    </source>
</evidence>
<evidence type="ECO:0000269" key="6">
    <source>
    </source>
</evidence>
<evidence type="ECO:0000303" key="7">
    <source>
    </source>
</evidence>
<evidence type="ECO:0000305" key="8"/>
<evidence type="ECO:0000305" key="9">
    <source>
    </source>
</evidence>
<evidence type="ECO:0000305" key="10">
    <source>
    </source>
</evidence>
<evidence type="ECO:0000305" key="11">
    <source>
    </source>
</evidence>
<proteinExistence type="evidence at transcript level"/>
<reference key="1">
    <citation type="journal article" date="2004" name="Appl. Environ. Microbiol.">
        <title>Indole-diterpene gene cluster from Aspergillus flavus.</title>
        <authorList>
            <person name="Zhang S."/>
            <person name="Monahan B.J."/>
            <person name="Tkacz J.S."/>
            <person name="Scott B."/>
        </authorList>
    </citation>
    <scope>NUCLEOTIDE SEQUENCE [GENOMIC DNA]</scope>
    <scope>INDUCTION</scope>
    <scope>FUNCTION</scope>
</reference>
<reference key="2">
    <citation type="journal article" date="2009" name="Appl. Environ. Microbiol.">
        <title>Identification of two aflatrem biosynthesis gene loci in Aspergillus flavus and metabolic engineering of Penicillium paxilli to elucidate their function.</title>
        <authorList>
            <person name="Nicholson M.J."/>
            <person name="Koulman A."/>
            <person name="Monahan B.J."/>
            <person name="Pritchard B.L."/>
            <person name="Payne G.A."/>
            <person name="Scott B."/>
        </authorList>
    </citation>
    <scope>NUCLEOTIDE SEQUENCE [GENOMIC DNA]</scope>
    <scope>IDENTIFICATION</scope>
    <scope>INDUCTION</scope>
    <scope>FUNCTION</scope>
    <source>
        <strain>NRRL 6541</strain>
    </source>
</reference>
<reference key="3">
    <citation type="journal article" date="1985" name="Environ. Health Perspect.">
        <title>Aflatrem: a tremorgenic mycotoxin with acute neurotoxic effects.</title>
        <authorList>
            <person name="Valdes J.J."/>
            <person name="Cameron J.E."/>
            <person name="Cole R.J."/>
        </authorList>
    </citation>
    <scope>FUNCTION</scope>
</reference>
<reference key="4">
    <citation type="journal article" date="2007" name="Appl. Microbiol. Biotechnol.">
        <title>Production of cyclopiazonic acid, aflatrem, and aflatoxin by Aspergillus flavus is regulated by veA, a gene necessary for sclerotial formation.</title>
        <authorList>
            <person name="Duran R.M."/>
            <person name="Cary J.W."/>
            <person name="Calvo A.M."/>
        </authorList>
    </citation>
    <scope>INDUCTION</scope>
</reference>
<keyword id="KW-0274">FAD</keyword>
<keyword id="KW-0285">Flavoprotein</keyword>
<keyword id="KW-0472">Membrane</keyword>
<keyword id="KW-0503">Monooxygenase</keyword>
<keyword id="KW-0560">Oxidoreductase</keyword>
<keyword id="KW-0812">Transmembrane</keyword>
<keyword id="KW-1133">Transmembrane helix</keyword>
<protein>
    <recommendedName>
        <fullName evidence="7">FAD-dependent monooxygenase atmM</fullName>
        <ecNumber evidence="9 10 11">1.-.-.-</ecNumber>
    </recommendedName>
    <alternativeName>
        <fullName evidence="7">Aflatrem synthesis protein M</fullName>
    </alternativeName>
</protein>
<sequence>MCDKDRFKVIIVGGSVAGLTLAHCLQRAGIDHVVLEKNSDLSPQVGASIGIIPNGGRILDQLGLFDAVERMTYPLSIATITYPDGYSFRNNYPKTVDERFGYPIAFLDRQKFLEILHTSYPDPSNIHTNCRVTHIRRHDSHMEVVTSSGQEYTGDLVVGADGVHSVIRSEMWKLADALEPGRVSKREKRSMKVEYACVFGISLPVPGLKVGDQVNAFHDGLTIITIHGKNGRVFWFVIKKLDDMYTYPDTVRFSSADAVRTCENIVHFPLVNGATFGHVWENREVTSMTALEENIFNTWYADRIVCIGDSIHKMTPNIGQGANTAIEDATVLTNLLYDRLSKNGHKKLARQELLQLLREFQSQRFRRVNKIYQDSRFLVRLHARDGIVKSLLARYIVPYMTELPADLASKSIADSPTIGFLPLPSRSGPGWLQWSRKQRRPATPWILVLLVIVVSFGLHSPELVIPTFWSNSLVSKTVE</sequence>
<name>ATMM_ASPFL</name>
<dbReference type="EC" id="1.-.-.-" evidence="9 10 11"/>
<dbReference type="EMBL" id="AY559849">
    <property type="protein sequence ID" value="AAT65719.1"/>
    <property type="molecule type" value="Genomic_DNA"/>
</dbReference>
<dbReference type="SMR" id="Q672V4"/>
<dbReference type="VEuPathDB" id="FungiDB:AFLA_009879"/>
<dbReference type="VEuPathDB" id="FungiDB:F9C07_1723127"/>
<dbReference type="GO" id="GO:0016020">
    <property type="term" value="C:membrane"/>
    <property type="evidence" value="ECO:0007669"/>
    <property type="project" value="UniProtKB-SubCell"/>
</dbReference>
<dbReference type="GO" id="GO:0071949">
    <property type="term" value="F:FAD binding"/>
    <property type="evidence" value="ECO:0007669"/>
    <property type="project" value="InterPro"/>
</dbReference>
<dbReference type="GO" id="GO:0004497">
    <property type="term" value="F:monooxygenase activity"/>
    <property type="evidence" value="ECO:0007669"/>
    <property type="project" value="UniProtKB-KW"/>
</dbReference>
<dbReference type="Gene3D" id="3.50.50.60">
    <property type="entry name" value="FAD/NAD(P)-binding domain"/>
    <property type="match status" value="1"/>
</dbReference>
<dbReference type="InterPro" id="IPR002938">
    <property type="entry name" value="FAD-bd"/>
</dbReference>
<dbReference type="InterPro" id="IPR036188">
    <property type="entry name" value="FAD/NAD-bd_sf"/>
</dbReference>
<dbReference type="InterPro" id="IPR050562">
    <property type="entry name" value="FAD_mOase_fung"/>
</dbReference>
<dbReference type="PANTHER" id="PTHR47356:SF2">
    <property type="entry name" value="FAD-BINDING DOMAIN-CONTAINING PROTEIN-RELATED"/>
    <property type="match status" value="1"/>
</dbReference>
<dbReference type="PANTHER" id="PTHR47356">
    <property type="entry name" value="FAD-DEPENDENT MONOOXYGENASE ASQG-RELATED"/>
    <property type="match status" value="1"/>
</dbReference>
<dbReference type="Pfam" id="PF01494">
    <property type="entry name" value="FAD_binding_3"/>
    <property type="match status" value="1"/>
</dbReference>
<dbReference type="PRINTS" id="PR00420">
    <property type="entry name" value="RNGMNOXGNASE"/>
</dbReference>
<dbReference type="SUPFAM" id="SSF51905">
    <property type="entry name" value="FAD/NAD(P)-binding domain"/>
    <property type="match status" value="1"/>
</dbReference>
<organism>
    <name type="scientific">Aspergillus flavus</name>
    <dbReference type="NCBI Taxonomy" id="5059"/>
    <lineage>
        <taxon>Eukaryota</taxon>
        <taxon>Fungi</taxon>
        <taxon>Dikarya</taxon>
        <taxon>Ascomycota</taxon>
        <taxon>Pezizomycotina</taxon>
        <taxon>Eurotiomycetes</taxon>
        <taxon>Eurotiomycetidae</taxon>
        <taxon>Eurotiales</taxon>
        <taxon>Aspergillaceae</taxon>
        <taxon>Aspergillus</taxon>
        <taxon>Aspergillus subgen. Circumdati</taxon>
    </lineage>
</organism>
<feature type="chain" id="PRO_0000436118" description="FAD-dependent monooxygenase atmM">
    <location>
        <begin position="1"/>
        <end position="479"/>
    </location>
</feature>
<feature type="transmembrane region" description="Helical" evidence="2">
    <location>
        <begin position="10"/>
        <end position="30"/>
    </location>
</feature>
<feature type="transmembrane region" description="Helical" evidence="2">
    <location>
        <begin position="445"/>
        <end position="465"/>
    </location>
</feature>
<feature type="binding site" evidence="1">
    <location>
        <position position="36"/>
    </location>
    <ligand>
        <name>FAD</name>
        <dbReference type="ChEBI" id="CHEBI:57692"/>
    </ligand>
</feature>
<feature type="binding site" evidence="1">
    <location>
        <position position="50"/>
    </location>
    <ligand>
        <name>FAD</name>
        <dbReference type="ChEBI" id="CHEBI:57692"/>
    </ligand>
</feature>
<feature type="binding site" evidence="1">
    <location>
        <position position="109"/>
    </location>
    <ligand>
        <name>FAD</name>
        <dbReference type="ChEBI" id="CHEBI:57692"/>
    </ligand>
</feature>
<feature type="binding site" evidence="1">
    <location>
        <position position="309"/>
    </location>
    <ligand>
        <name>FAD</name>
        <dbReference type="ChEBI" id="CHEBI:57692"/>
    </ligand>
</feature>
<feature type="binding site" evidence="1">
    <location>
        <position position="322"/>
    </location>
    <ligand>
        <name>FAD</name>
        <dbReference type="ChEBI" id="CHEBI:57692"/>
    </ligand>
</feature>
<accession>Q672V4</accession>